<proteinExistence type="inferred from homology"/>
<reference key="1">
    <citation type="submission" date="2006-12" db="EMBL/GenBank/DDBJ databases">
        <authorList>
            <person name="Fouts D.E."/>
            <person name="Nelson K.E."/>
            <person name="Sebastian Y."/>
        </authorList>
    </citation>
    <scope>NUCLEOTIDE SEQUENCE [LARGE SCALE GENOMIC DNA]</scope>
    <source>
        <strain>81-176</strain>
    </source>
</reference>
<feature type="chain" id="PRO_1000016101" description="Aspartyl/glutamyl-tRNA(Asn/Gln) amidotransferase subunit C">
    <location>
        <begin position="1"/>
        <end position="94"/>
    </location>
</feature>
<evidence type="ECO:0000255" key="1">
    <source>
        <dbReference type="HAMAP-Rule" id="MF_00122"/>
    </source>
</evidence>
<comment type="function">
    <text evidence="1">Allows the formation of correctly charged Asn-tRNA(Asn) or Gln-tRNA(Gln) through the transamidation of misacylated Asp-tRNA(Asn) or Glu-tRNA(Gln) in organisms which lack either or both of asparaginyl-tRNA or glutaminyl-tRNA synthetases. The reaction takes place in the presence of glutamine and ATP through an activated phospho-Asp-tRNA(Asn) or phospho-Glu-tRNA(Gln).</text>
</comment>
<comment type="catalytic activity">
    <reaction evidence="1">
        <text>L-glutamyl-tRNA(Gln) + L-glutamine + ATP + H2O = L-glutaminyl-tRNA(Gln) + L-glutamate + ADP + phosphate + H(+)</text>
        <dbReference type="Rhea" id="RHEA:17521"/>
        <dbReference type="Rhea" id="RHEA-COMP:9681"/>
        <dbReference type="Rhea" id="RHEA-COMP:9684"/>
        <dbReference type="ChEBI" id="CHEBI:15377"/>
        <dbReference type="ChEBI" id="CHEBI:15378"/>
        <dbReference type="ChEBI" id="CHEBI:29985"/>
        <dbReference type="ChEBI" id="CHEBI:30616"/>
        <dbReference type="ChEBI" id="CHEBI:43474"/>
        <dbReference type="ChEBI" id="CHEBI:58359"/>
        <dbReference type="ChEBI" id="CHEBI:78520"/>
        <dbReference type="ChEBI" id="CHEBI:78521"/>
        <dbReference type="ChEBI" id="CHEBI:456216"/>
    </reaction>
</comment>
<comment type="catalytic activity">
    <reaction evidence="1">
        <text>L-aspartyl-tRNA(Asn) + L-glutamine + ATP + H2O = L-asparaginyl-tRNA(Asn) + L-glutamate + ADP + phosphate + 2 H(+)</text>
        <dbReference type="Rhea" id="RHEA:14513"/>
        <dbReference type="Rhea" id="RHEA-COMP:9674"/>
        <dbReference type="Rhea" id="RHEA-COMP:9677"/>
        <dbReference type="ChEBI" id="CHEBI:15377"/>
        <dbReference type="ChEBI" id="CHEBI:15378"/>
        <dbReference type="ChEBI" id="CHEBI:29985"/>
        <dbReference type="ChEBI" id="CHEBI:30616"/>
        <dbReference type="ChEBI" id="CHEBI:43474"/>
        <dbReference type="ChEBI" id="CHEBI:58359"/>
        <dbReference type="ChEBI" id="CHEBI:78515"/>
        <dbReference type="ChEBI" id="CHEBI:78516"/>
        <dbReference type="ChEBI" id="CHEBI:456216"/>
    </reaction>
</comment>
<comment type="subunit">
    <text evidence="1">Heterotrimer of A, B and C subunits.</text>
</comment>
<comment type="similarity">
    <text evidence="1">Belongs to the GatC family.</text>
</comment>
<dbReference type="EC" id="6.3.5.-" evidence="1"/>
<dbReference type="EMBL" id="CP000538">
    <property type="protein sequence ID" value="EAQ73439.1"/>
    <property type="molecule type" value="Genomic_DNA"/>
</dbReference>
<dbReference type="RefSeq" id="WP_002854550.1">
    <property type="nucleotide sequence ID" value="NC_008787.1"/>
</dbReference>
<dbReference type="SMR" id="A1VYB8"/>
<dbReference type="KEGG" id="cjj:CJJ81176_0421"/>
<dbReference type="eggNOG" id="COG0721">
    <property type="taxonomic scope" value="Bacteria"/>
</dbReference>
<dbReference type="HOGENOM" id="CLU_105899_2_1_7"/>
<dbReference type="Proteomes" id="UP000000646">
    <property type="component" value="Chromosome"/>
</dbReference>
<dbReference type="GO" id="GO:0050566">
    <property type="term" value="F:asparaginyl-tRNA synthase (glutamine-hydrolyzing) activity"/>
    <property type="evidence" value="ECO:0007669"/>
    <property type="project" value="RHEA"/>
</dbReference>
<dbReference type="GO" id="GO:0005524">
    <property type="term" value="F:ATP binding"/>
    <property type="evidence" value="ECO:0007669"/>
    <property type="project" value="UniProtKB-KW"/>
</dbReference>
<dbReference type="GO" id="GO:0050567">
    <property type="term" value="F:glutaminyl-tRNA synthase (glutamine-hydrolyzing) activity"/>
    <property type="evidence" value="ECO:0007669"/>
    <property type="project" value="UniProtKB-UniRule"/>
</dbReference>
<dbReference type="GO" id="GO:0070681">
    <property type="term" value="P:glutaminyl-tRNAGln biosynthesis via transamidation"/>
    <property type="evidence" value="ECO:0007669"/>
    <property type="project" value="TreeGrafter"/>
</dbReference>
<dbReference type="GO" id="GO:0006450">
    <property type="term" value="P:regulation of translational fidelity"/>
    <property type="evidence" value="ECO:0007669"/>
    <property type="project" value="InterPro"/>
</dbReference>
<dbReference type="GO" id="GO:0006412">
    <property type="term" value="P:translation"/>
    <property type="evidence" value="ECO:0007669"/>
    <property type="project" value="UniProtKB-UniRule"/>
</dbReference>
<dbReference type="Gene3D" id="1.10.20.60">
    <property type="entry name" value="Glu-tRNAGln amidotransferase C subunit, N-terminal domain"/>
    <property type="match status" value="1"/>
</dbReference>
<dbReference type="HAMAP" id="MF_00122">
    <property type="entry name" value="GatC"/>
    <property type="match status" value="1"/>
</dbReference>
<dbReference type="InterPro" id="IPR036113">
    <property type="entry name" value="Asp/Glu-ADT_sf_sub_c"/>
</dbReference>
<dbReference type="InterPro" id="IPR003837">
    <property type="entry name" value="GatC"/>
</dbReference>
<dbReference type="NCBIfam" id="TIGR00135">
    <property type="entry name" value="gatC"/>
    <property type="match status" value="1"/>
</dbReference>
<dbReference type="PANTHER" id="PTHR15004">
    <property type="entry name" value="GLUTAMYL-TRNA(GLN) AMIDOTRANSFERASE SUBUNIT C, MITOCHONDRIAL"/>
    <property type="match status" value="1"/>
</dbReference>
<dbReference type="PANTHER" id="PTHR15004:SF0">
    <property type="entry name" value="GLUTAMYL-TRNA(GLN) AMIDOTRANSFERASE SUBUNIT C, MITOCHONDRIAL"/>
    <property type="match status" value="1"/>
</dbReference>
<dbReference type="Pfam" id="PF02686">
    <property type="entry name" value="GatC"/>
    <property type="match status" value="1"/>
</dbReference>
<dbReference type="SUPFAM" id="SSF141000">
    <property type="entry name" value="Glu-tRNAGln amidotransferase C subunit"/>
    <property type="match status" value="1"/>
</dbReference>
<protein>
    <recommendedName>
        <fullName evidence="1">Aspartyl/glutamyl-tRNA(Asn/Gln) amidotransferase subunit C</fullName>
        <shortName evidence="1">Asp/Glu-ADT subunit C</shortName>
        <ecNumber evidence="1">6.3.5.-</ecNumber>
    </recommendedName>
</protein>
<keyword id="KW-0067">ATP-binding</keyword>
<keyword id="KW-0436">Ligase</keyword>
<keyword id="KW-0547">Nucleotide-binding</keyword>
<keyword id="KW-0648">Protein biosynthesis</keyword>
<name>GATC_CAMJJ</name>
<organism>
    <name type="scientific">Campylobacter jejuni subsp. jejuni serotype O:23/36 (strain 81-176)</name>
    <dbReference type="NCBI Taxonomy" id="354242"/>
    <lineage>
        <taxon>Bacteria</taxon>
        <taxon>Pseudomonadati</taxon>
        <taxon>Campylobacterota</taxon>
        <taxon>Epsilonproteobacteria</taxon>
        <taxon>Campylobacterales</taxon>
        <taxon>Campylobacteraceae</taxon>
        <taxon>Campylobacter</taxon>
    </lineage>
</organism>
<gene>
    <name evidence="1" type="primary">gatC</name>
    <name type="ordered locus">CJJ81176_0421</name>
</gene>
<sequence length="94" mass="10717">MQIDEKLLSKLEKLSALQITKNRNETIVQLSEIVNFVEKLNELDLDSQEITVSTIKGGAPLRIDEIRNSNVIDEVLDCAPKKQEHFFVVPKIIE</sequence>
<accession>A1VYB8</accession>